<reference key="1">
    <citation type="journal article" date="2007" name="Genome Res.">
        <title>Lateral gene transfer between obligate intracellular bacteria: evidence from the Rickettsia massiliae genome.</title>
        <authorList>
            <person name="Blanc G."/>
            <person name="Ogata H."/>
            <person name="Robert C."/>
            <person name="Audic S."/>
            <person name="Claverie J.-M."/>
            <person name="Raoult D."/>
        </authorList>
    </citation>
    <scope>NUCLEOTIDE SEQUENCE [LARGE SCALE GENOMIC DNA]</scope>
    <source>
        <strain>Mtu5</strain>
    </source>
</reference>
<keyword id="KW-0648">Protein biosynthesis</keyword>
<keyword id="KW-0808">Transferase</keyword>
<comment type="function">
    <text evidence="1">Attaches a formyl group to the free amino group of methionyl-tRNA(fMet). The formyl group appears to play a dual role in the initiator identity of N-formylmethionyl-tRNA by promoting its recognition by IF2 and preventing the misappropriation of this tRNA by the elongation apparatus.</text>
</comment>
<comment type="catalytic activity">
    <reaction evidence="1">
        <text>L-methionyl-tRNA(fMet) + (6R)-10-formyltetrahydrofolate = N-formyl-L-methionyl-tRNA(fMet) + (6S)-5,6,7,8-tetrahydrofolate + H(+)</text>
        <dbReference type="Rhea" id="RHEA:24380"/>
        <dbReference type="Rhea" id="RHEA-COMP:9952"/>
        <dbReference type="Rhea" id="RHEA-COMP:9953"/>
        <dbReference type="ChEBI" id="CHEBI:15378"/>
        <dbReference type="ChEBI" id="CHEBI:57453"/>
        <dbReference type="ChEBI" id="CHEBI:78530"/>
        <dbReference type="ChEBI" id="CHEBI:78844"/>
        <dbReference type="ChEBI" id="CHEBI:195366"/>
        <dbReference type="EC" id="2.1.2.9"/>
    </reaction>
</comment>
<comment type="similarity">
    <text evidence="1">Belongs to the Fmt family.</text>
</comment>
<sequence>MKVIFMGTPEFAVPALKKLITHHEVKAVFTQQPKAKGRGLNLAKSPIHQLAFEHQIPVYTPSTLRNDVINLINKVNADIIVVIAYGFIVPQAILEAKKYGCLNIHPSDLPRHRGAAPLQRTIIEGDRKSSVCIMRMDTGLDTGDILMKEDFDLEERTTLEELHNKCANLGAELLIKILANIDNIVPIKQSSDGVTYAHKLTKEEGKINWHESAYKIDCKIRGMNPWPGAYFSYNDKIIKILEAEYLNADHHFTSGTVISDKLEIACGSGILRVKKLQQESKKALNIEEFLRGTNILKDTVLK</sequence>
<evidence type="ECO:0000255" key="1">
    <source>
        <dbReference type="HAMAP-Rule" id="MF_00182"/>
    </source>
</evidence>
<feature type="chain" id="PRO_1000058407" description="Methionyl-tRNA formyltransferase">
    <location>
        <begin position="1"/>
        <end position="302"/>
    </location>
</feature>
<feature type="binding site" evidence="1">
    <location>
        <begin position="107"/>
        <end position="110"/>
    </location>
    <ligand>
        <name>(6S)-5,6,7,8-tetrahydrofolate</name>
        <dbReference type="ChEBI" id="CHEBI:57453"/>
    </ligand>
</feature>
<accession>A8F0W5</accession>
<proteinExistence type="inferred from homology"/>
<protein>
    <recommendedName>
        <fullName evidence="1">Methionyl-tRNA formyltransferase</fullName>
        <ecNumber evidence="1">2.1.2.9</ecNumber>
    </recommendedName>
</protein>
<dbReference type="EC" id="2.1.2.9" evidence="1"/>
<dbReference type="EMBL" id="CP000683">
    <property type="protein sequence ID" value="ABV84551.1"/>
    <property type="molecule type" value="Genomic_DNA"/>
</dbReference>
<dbReference type="RefSeq" id="WP_012152528.1">
    <property type="nucleotide sequence ID" value="NC_009900.1"/>
</dbReference>
<dbReference type="SMR" id="A8F0W5"/>
<dbReference type="KEGG" id="rms:RMA_0280"/>
<dbReference type="HOGENOM" id="CLU_033347_1_1_5"/>
<dbReference type="Proteomes" id="UP000001311">
    <property type="component" value="Chromosome"/>
</dbReference>
<dbReference type="GO" id="GO:0005829">
    <property type="term" value="C:cytosol"/>
    <property type="evidence" value="ECO:0007669"/>
    <property type="project" value="TreeGrafter"/>
</dbReference>
<dbReference type="GO" id="GO:0004479">
    <property type="term" value="F:methionyl-tRNA formyltransferase activity"/>
    <property type="evidence" value="ECO:0007669"/>
    <property type="project" value="UniProtKB-UniRule"/>
</dbReference>
<dbReference type="CDD" id="cd08646">
    <property type="entry name" value="FMT_core_Met-tRNA-FMT_N"/>
    <property type="match status" value="1"/>
</dbReference>
<dbReference type="CDD" id="cd08704">
    <property type="entry name" value="Met_tRNA_FMT_C"/>
    <property type="match status" value="1"/>
</dbReference>
<dbReference type="Gene3D" id="3.40.50.12230">
    <property type="match status" value="1"/>
</dbReference>
<dbReference type="HAMAP" id="MF_00182">
    <property type="entry name" value="Formyl_trans"/>
    <property type="match status" value="1"/>
</dbReference>
<dbReference type="InterPro" id="IPR005794">
    <property type="entry name" value="Fmt"/>
</dbReference>
<dbReference type="InterPro" id="IPR005793">
    <property type="entry name" value="Formyl_trans_C"/>
</dbReference>
<dbReference type="InterPro" id="IPR002376">
    <property type="entry name" value="Formyl_transf_N"/>
</dbReference>
<dbReference type="InterPro" id="IPR036477">
    <property type="entry name" value="Formyl_transf_N_sf"/>
</dbReference>
<dbReference type="InterPro" id="IPR011034">
    <property type="entry name" value="Formyl_transferase-like_C_sf"/>
</dbReference>
<dbReference type="InterPro" id="IPR044135">
    <property type="entry name" value="Met-tRNA-FMT_C"/>
</dbReference>
<dbReference type="InterPro" id="IPR041711">
    <property type="entry name" value="Met-tRNA-FMT_N"/>
</dbReference>
<dbReference type="NCBIfam" id="TIGR00460">
    <property type="entry name" value="fmt"/>
    <property type="match status" value="1"/>
</dbReference>
<dbReference type="PANTHER" id="PTHR11138">
    <property type="entry name" value="METHIONYL-TRNA FORMYLTRANSFERASE"/>
    <property type="match status" value="1"/>
</dbReference>
<dbReference type="PANTHER" id="PTHR11138:SF5">
    <property type="entry name" value="METHIONYL-TRNA FORMYLTRANSFERASE, MITOCHONDRIAL"/>
    <property type="match status" value="1"/>
</dbReference>
<dbReference type="Pfam" id="PF02911">
    <property type="entry name" value="Formyl_trans_C"/>
    <property type="match status" value="1"/>
</dbReference>
<dbReference type="Pfam" id="PF00551">
    <property type="entry name" value="Formyl_trans_N"/>
    <property type="match status" value="1"/>
</dbReference>
<dbReference type="SUPFAM" id="SSF50486">
    <property type="entry name" value="FMT C-terminal domain-like"/>
    <property type="match status" value="1"/>
</dbReference>
<dbReference type="SUPFAM" id="SSF53328">
    <property type="entry name" value="Formyltransferase"/>
    <property type="match status" value="1"/>
</dbReference>
<gene>
    <name evidence="1" type="primary">fmt</name>
    <name type="ordered locus">RMA_0280</name>
</gene>
<name>FMT_RICM5</name>
<organism>
    <name type="scientific">Rickettsia massiliae (strain Mtu5)</name>
    <dbReference type="NCBI Taxonomy" id="416276"/>
    <lineage>
        <taxon>Bacteria</taxon>
        <taxon>Pseudomonadati</taxon>
        <taxon>Pseudomonadota</taxon>
        <taxon>Alphaproteobacteria</taxon>
        <taxon>Rickettsiales</taxon>
        <taxon>Rickettsiaceae</taxon>
        <taxon>Rickettsieae</taxon>
        <taxon>Rickettsia</taxon>
        <taxon>spotted fever group</taxon>
    </lineage>
</organism>